<gene>
    <name evidence="1" type="primary">recX</name>
    <name type="ordered locus">SFV_2807</name>
</gene>
<dbReference type="EMBL" id="CP000266">
    <property type="protein sequence ID" value="ABF04891.1"/>
    <property type="molecule type" value="Genomic_DNA"/>
</dbReference>
<dbReference type="RefSeq" id="WP_000140506.1">
    <property type="nucleotide sequence ID" value="NC_008258.1"/>
</dbReference>
<dbReference type="SMR" id="Q0T1C4"/>
<dbReference type="GeneID" id="75172780"/>
<dbReference type="KEGG" id="sfv:SFV_2807"/>
<dbReference type="HOGENOM" id="CLU_066607_3_2_6"/>
<dbReference type="Proteomes" id="UP000000659">
    <property type="component" value="Chromosome"/>
</dbReference>
<dbReference type="GO" id="GO:0005737">
    <property type="term" value="C:cytoplasm"/>
    <property type="evidence" value="ECO:0007669"/>
    <property type="project" value="UniProtKB-SubCell"/>
</dbReference>
<dbReference type="GO" id="GO:0006282">
    <property type="term" value="P:regulation of DNA repair"/>
    <property type="evidence" value="ECO:0007669"/>
    <property type="project" value="UniProtKB-UniRule"/>
</dbReference>
<dbReference type="FunFam" id="1.10.10.10:FF:000133">
    <property type="entry name" value="Regulatory protein RecX"/>
    <property type="match status" value="1"/>
</dbReference>
<dbReference type="FunFam" id="1.10.10.10:FF:000134">
    <property type="entry name" value="Regulatory protein RecX"/>
    <property type="match status" value="1"/>
</dbReference>
<dbReference type="FunFam" id="1.10.10.10:FF:000209">
    <property type="entry name" value="Regulatory protein RecX"/>
    <property type="match status" value="1"/>
</dbReference>
<dbReference type="Gene3D" id="1.10.10.10">
    <property type="entry name" value="Winged helix-like DNA-binding domain superfamily/Winged helix DNA-binding domain"/>
    <property type="match status" value="3"/>
</dbReference>
<dbReference type="HAMAP" id="MF_01114">
    <property type="entry name" value="RecX"/>
    <property type="match status" value="1"/>
</dbReference>
<dbReference type="InterPro" id="IPR053926">
    <property type="entry name" value="RecX_HTH_1st"/>
</dbReference>
<dbReference type="InterPro" id="IPR053924">
    <property type="entry name" value="RecX_HTH_2nd"/>
</dbReference>
<dbReference type="InterPro" id="IPR053925">
    <property type="entry name" value="RecX_HTH_3rd"/>
</dbReference>
<dbReference type="InterPro" id="IPR003783">
    <property type="entry name" value="Regulatory_RecX"/>
</dbReference>
<dbReference type="InterPro" id="IPR036388">
    <property type="entry name" value="WH-like_DNA-bd_sf"/>
</dbReference>
<dbReference type="NCBIfam" id="NF001052">
    <property type="entry name" value="PRK00117.1-1"/>
    <property type="match status" value="1"/>
</dbReference>
<dbReference type="PANTHER" id="PTHR33602">
    <property type="entry name" value="REGULATORY PROTEIN RECX FAMILY PROTEIN"/>
    <property type="match status" value="1"/>
</dbReference>
<dbReference type="PANTHER" id="PTHR33602:SF1">
    <property type="entry name" value="REGULATORY PROTEIN RECX FAMILY PROTEIN"/>
    <property type="match status" value="1"/>
</dbReference>
<dbReference type="Pfam" id="PF21982">
    <property type="entry name" value="RecX_HTH1"/>
    <property type="match status" value="1"/>
</dbReference>
<dbReference type="Pfam" id="PF02631">
    <property type="entry name" value="RecX_HTH2"/>
    <property type="match status" value="1"/>
</dbReference>
<dbReference type="Pfam" id="PF21981">
    <property type="entry name" value="RecX_HTH3"/>
    <property type="match status" value="1"/>
</dbReference>
<reference key="1">
    <citation type="journal article" date="2006" name="BMC Genomics">
        <title>Complete genome sequence of Shigella flexneri 5b and comparison with Shigella flexneri 2a.</title>
        <authorList>
            <person name="Nie H."/>
            <person name="Yang F."/>
            <person name="Zhang X."/>
            <person name="Yang J."/>
            <person name="Chen L."/>
            <person name="Wang J."/>
            <person name="Xiong Z."/>
            <person name="Peng J."/>
            <person name="Sun L."/>
            <person name="Dong J."/>
            <person name="Xue Y."/>
            <person name="Xu X."/>
            <person name="Chen S."/>
            <person name="Yao Z."/>
            <person name="Shen Y."/>
            <person name="Jin Q."/>
        </authorList>
    </citation>
    <scope>NUCLEOTIDE SEQUENCE [LARGE SCALE GENOMIC DNA]</scope>
    <source>
        <strain>8401</strain>
    </source>
</reference>
<comment type="function">
    <text evidence="1">Modulates RecA activity.</text>
</comment>
<comment type="subcellular location">
    <subcellularLocation>
        <location evidence="1">Cytoplasm</location>
    </subcellularLocation>
</comment>
<comment type="similarity">
    <text evidence="1">Belongs to the RecX family.</text>
</comment>
<feature type="chain" id="PRO_1000065205" description="Regulatory protein RecX">
    <location>
        <begin position="1"/>
        <end position="166"/>
    </location>
</feature>
<evidence type="ECO:0000255" key="1">
    <source>
        <dbReference type="HAMAP-Rule" id="MF_01114"/>
    </source>
</evidence>
<keyword id="KW-0963">Cytoplasm</keyword>
<name>RECX_SHIF8</name>
<proteinExistence type="inferred from homology"/>
<accession>Q0T1C4</accession>
<sequence length="166" mass="19410">MTESTSRRPAYARLLDRAVRILAVRDHSEQELRRKLAAPIMGKNGPEEIDATAEDYERVIAWCHEHGYLDDSRFVARFIASRSRKGYGPARIRQELNQKGISREATEKAMRECDIDWCALARDQATRKYGEPLPTVFSEKVKIQRFLLYRGYLMEDIQDIWRNFAD</sequence>
<protein>
    <recommendedName>
        <fullName evidence="1">Regulatory protein RecX</fullName>
    </recommendedName>
</protein>
<organism>
    <name type="scientific">Shigella flexneri serotype 5b (strain 8401)</name>
    <dbReference type="NCBI Taxonomy" id="373384"/>
    <lineage>
        <taxon>Bacteria</taxon>
        <taxon>Pseudomonadati</taxon>
        <taxon>Pseudomonadota</taxon>
        <taxon>Gammaproteobacteria</taxon>
        <taxon>Enterobacterales</taxon>
        <taxon>Enterobacteriaceae</taxon>
        <taxon>Shigella</taxon>
    </lineage>
</organism>